<evidence type="ECO:0000250" key="1"/>
<evidence type="ECO:0000269" key="2">
    <source>
    </source>
</evidence>
<evidence type="ECO:0000269" key="3">
    <source>
    </source>
</evidence>
<evidence type="ECO:0000269" key="4">
    <source>
    </source>
</evidence>
<evidence type="ECO:0000305" key="5"/>
<protein>
    <recommendedName>
        <fullName>Phosphopantetheine adenylyltransferase</fullName>
        <shortName>PPAT</shortName>
        <ecNumber>2.7.7.3</ecNumber>
    </recommendedName>
    <alternativeName>
        <fullName>Coenzyme A biosynthesis protein 4</fullName>
    </alternativeName>
    <alternativeName>
        <fullName>Dephospho-CoA pyrophosphorylase</fullName>
    </alternativeName>
    <alternativeName>
        <fullName>Pantetheine-phosphate adenylyltransferase</fullName>
    </alternativeName>
</protein>
<accession>P53332</accession>
<accession>D6VV54</accession>
<gene>
    <name type="primary">CAB4</name>
    <name type="ordered locus">YGR277C</name>
</gene>
<proteinExistence type="evidence at protein level"/>
<reference key="1">
    <citation type="journal article" date="1997" name="Yeast">
        <title>Sequence analysis of a near-subtelomeric 35.4 kb DNA segment on the right arm of chromosome VII from Saccharomyces cerevisiae carrying the MAL1 locus reveals 15 complete open reading frames, including ZUO1, BGL2 and BIO2 genes and an ABC transporter gene.</title>
        <authorList>
            <person name="Volckaert G."/>
            <person name="Voet M."/>
            <person name="Robben J."/>
        </authorList>
    </citation>
    <scope>NUCLEOTIDE SEQUENCE [GENOMIC DNA]</scope>
    <source>
        <strain>ATCC 96604 / S288c / FY1679</strain>
    </source>
</reference>
<reference key="2">
    <citation type="journal article" date="1997" name="Nature">
        <title>The nucleotide sequence of Saccharomyces cerevisiae chromosome VII.</title>
        <authorList>
            <person name="Tettelin H."/>
            <person name="Agostoni-Carbone M.L."/>
            <person name="Albermann K."/>
            <person name="Albers M."/>
            <person name="Arroyo J."/>
            <person name="Backes U."/>
            <person name="Barreiros T."/>
            <person name="Bertani I."/>
            <person name="Bjourson A.J."/>
            <person name="Brueckner M."/>
            <person name="Bruschi C.V."/>
            <person name="Carignani G."/>
            <person name="Castagnoli L."/>
            <person name="Cerdan E."/>
            <person name="Clemente M.L."/>
            <person name="Coblenz A."/>
            <person name="Coglievina M."/>
            <person name="Coissac E."/>
            <person name="Defoor E."/>
            <person name="Del Bino S."/>
            <person name="Delius H."/>
            <person name="Delneri D."/>
            <person name="de Wergifosse P."/>
            <person name="Dujon B."/>
            <person name="Durand P."/>
            <person name="Entian K.-D."/>
            <person name="Eraso P."/>
            <person name="Escribano V."/>
            <person name="Fabiani L."/>
            <person name="Fartmann B."/>
            <person name="Feroli F."/>
            <person name="Feuermann M."/>
            <person name="Frontali L."/>
            <person name="Garcia-Gonzalez M."/>
            <person name="Garcia-Saez M.I."/>
            <person name="Goffeau A."/>
            <person name="Guerreiro P."/>
            <person name="Hani J."/>
            <person name="Hansen M."/>
            <person name="Hebling U."/>
            <person name="Hernandez K."/>
            <person name="Heumann K."/>
            <person name="Hilger F."/>
            <person name="Hofmann B."/>
            <person name="Indge K.J."/>
            <person name="James C.M."/>
            <person name="Klima R."/>
            <person name="Koetter P."/>
            <person name="Kramer B."/>
            <person name="Kramer W."/>
            <person name="Lauquin G."/>
            <person name="Leuther H."/>
            <person name="Louis E.J."/>
            <person name="Maillier E."/>
            <person name="Marconi A."/>
            <person name="Martegani E."/>
            <person name="Mazon M.J."/>
            <person name="Mazzoni C."/>
            <person name="McReynolds A.D.K."/>
            <person name="Melchioretto P."/>
            <person name="Mewes H.-W."/>
            <person name="Minenkova O."/>
            <person name="Mueller-Auer S."/>
            <person name="Nawrocki A."/>
            <person name="Netter P."/>
            <person name="Neu R."/>
            <person name="Nombela C."/>
            <person name="Oliver S.G."/>
            <person name="Panzeri L."/>
            <person name="Paoluzi S."/>
            <person name="Plevani P."/>
            <person name="Portetelle D."/>
            <person name="Portillo F."/>
            <person name="Potier S."/>
            <person name="Purnelle B."/>
            <person name="Rieger M."/>
            <person name="Riles L."/>
            <person name="Rinaldi T."/>
            <person name="Robben J."/>
            <person name="Rodrigues-Pousada C."/>
            <person name="Rodriguez-Belmonte E."/>
            <person name="Rodriguez-Torres A.M."/>
            <person name="Rose M."/>
            <person name="Ruzzi M."/>
            <person name="Saliola M."/>
            <person name="Sanchez-Perez M."/>
            <person name="Schaefer B."/>
            <person name="Schaefer M."/>
            <person name="Scharfe M."/>
            <person name="Schmidheini T."/>
            <person name="Schreer A."/>
            <person name="Skala J."/>
            <person name="Souciet J.-L."/>
            <person name="Steensma H.Y."/>
            <person name="Talla E."/>
            <person name="Thierry A."/>
            <person name="Vandenbol M."/>
            <person name="van der Aart Q.J.M."/>
            <person name="Van Dyck L."/>
            <person name="Vanoni M."/>
            <person name="Verhasselt P."/>
            <person name="Voet M."/>
            <person name="Volckaert G."/>
            <person name="Wambutt R."/>
            <person name="Watson M.D."/>
            <person name="Weber N."/>
            <person name="Wedler E."/>
            <person name="Wedler H."/>
            <person name="Wipfli P."/>
            <person name="Wolf K."/>
            <person name="Wright L.F."/>
            <person name="Zaccaria P."/>
            <person name="Zimmermann M."/>
            <person name="Zollner A."/>
            <person name="Kleine K."/>
        </authorList>
    </citation>
    <scope>NUCLEOTIDE SEQUENCE [LARGE SCALE GENOMIC DNA]</scope>
    <source>
        <strain>ATCC 204508 / S288c</strain>
    </source>
</reference>
<reference key="3">
    <citation type="journal article" date="2014" name="G3 (Bethesda)">
        <title>The reference genome sequence of Saccharomyces cerevisiae: Then and now.</title>
        <authorList>
            <person name="Engel S.R."/>
            <person name="Dietrich F.S."/>
            <person name="Fisk D.G."/>
            <person name="Binkley G."/>
            <person name="Balakrishnan R."/>
            <person name="Costanzo M.C."/>
            <person name="Dwight S.S."/>
            <person name="Hitz B.C."/>
            <person name="Karra K."/>
            <person name="Nash R.S."/>
            <person name="Weng S."/>
            <person name="Wong E.D."/>
            <person name="Lloyd P."/>
            <person name="Skrzypek M.S."/>
            <person name="Miyasato S.R."/>
            <person name="Simison M."/>
            <person name="Cherry J.M."/>
        </authorList>
    </citation>
    <scope>GENOME REANNOTATION</scope>
    <source>
        <strain>ATCC 204508 / S288c</strain>
    </source>
</reference>
<reference key="4">
    <citation type="journal article" date="2007" name="Genome Res.">
        <title>Approaching a complete repository of sequence-verified protein-encoding clones for Saccharomyces cerevisiae.</title>
        <authorList>
            <person name="Hu Y."/>
            <person name="Rolfs A."/>
            <person name="Bhullar B."/>
            <person name="Murthy T.V.S."/>
            <person name="Zhu C."/>
            <person name="Berger M.F."/>
            <person name="Camargo A.A."/>
            <person name="Kelley F."/>
            <person name="McCarron S."/>
            <person name="Jepson D."/>
            <person name="Richardson A."/>
            <person name="Raphael J."/>
            <person name="Moreira D."/>
            <person name="Taycher E."/>
            <person name="Zuo D."/>
            <person name="Mohr S."/>
            <person name="Kane M.F."/>
            <person name="Williamson J."/>
            <person name="Simpson A.J.G."/>
            <person name="Bulyk M.L."/>
            <person name="Harlow E."/>
            <person name="Marsischky G."/>
            <person name="Kolodner R.D."/>
            <person name="LaBaer J."/>
        </authorList>
    </citation>
    <scope>NUCLEOTIDE SEQUENCE [GENOMIC DNA]</scope>
    <source>
        <strain>ATCC 204508 / S288c</strain>
    </source>
</reference>
<reference key="5">
    <citation type="journal article" date="1997" name="Yeast">
        <title>The sequence of a 8 kb segment on the right arm of yeast chromosome VII identifies four new open reading frames and the genes for yTAFII145.</title>
        <authorList>
            <person name="Ruzzi M."/>
            <person name="Marconi A."/>
            <person name="Saliola M."/>
            <person name="Fabiani L."/>
            <person name="Montebove F."/>
            <person name="Frontali L."/>
        </authorList>
    </citation>
    <scope>NUCLEOTIDE SEQUENCE [GENOMIC DNA] OF 94-305</scope>
    <source>
        <strain>ATCC 204508 / S288c</strain>
    </source>
</reference>
<reference key="6">
    <citation type="journal article" date="2003" name="Mol. Cell">
        <title>Assigning function to yeast proteins by integration of technologies.</title>
        <authorList>
            <person name="Hazbun T.R."/>
            <person name="Malmstroem L."/>
            <person name="Anderson S."/>
            <person name="Graczyk B.J."/>
            <person name="Fox B."/>
            <person name="Riffle M."/>
            <person name="Sundin B.A."/>
            <person name="Aranda J.D."/>
            <person name="McDonald W.H."/>
            <person name="Chiu C.-H."/>
            <person name="Snydsman B.E."/>
            <person name="Bradley P."/>
            <person name="Muller E.G.D."/>
            <person name="Fields S."/>
            <person name="Baker D."/>
            <person name="Yates J.R. III"/>
            <person name="Davis T.N."/>
        </authorList>
    </citation>
    <scope>IDENTIFICATION BY MASS SPECTROMETRY</scope>
    <scope>SUBCELLULAR LOCATION [LARGE SCALE ANALYSIS]</scope>
</reference>
<reference key="7">
    <citation type="journal article" date="2003" name="Nature">
        <title>Global analysis of protein expression in yeast.</title>
        <authorList>
            <person name="Ghaemmaghami S."/>
            <person name="Huh W.-K."/>
            <person name="Bower K."/>
            <person name="Howson R.W."/>
            <person name="Belle A."/>
            <person name="Dephoure N."/>
            <person name="O'Shea E.K."/>
            <person name="Weissman J.S."/>
        </authorList>
    </citation>
    <scope>LEVEL OF PROTEIN EXPRESSION [LARGE SCALE ANALYSIS]</scope>
</reference>
<reference key="8">
    <citation type="journal article" date="2009" name="Curr. Genet.">
        <title>Genetic analysis of coenzyme A biosynthesis in the yeast Saccharomyces cerevisiae: identification of a conditional mutation in the pantothenate kinase gene CAB1.</title>
        <authorList>
            <person name="Olzhausen J."/>
            <person name="Schuebbe S."/>
            <person name="Schueller H.-J."/>
        </authorList>
    </citation>
    <scope>FUNCTION</scope>
</reference>
<feature type="chain" id="PRO_0000202870" description="Phosphopantetheine adenylyltransferase">
    <location>
        <begin position="1"/>
        <end position="305"/>
    </location>
</feature>
<organism>
    <name type="scientific">Saccharomyces cerevisiae (strain ATCC 204508 / S288c)</name>
    <name type="common">Baker's yeast</name>
    <dbReference type="NCBI Taxonomy" id="559292"/>
    <lineage>
        <taxon>Eukaryota</taxon>
        <taxon>Fungi</taxon>
        <taxon>Dikarya</taxon>
        <taxon>Ascomycota</taxon>
        <taxon>Saccharomycotina</taxon>
        <taxon>Saccharomycetes</taxon>
        <taxon>Saccharomycetales</taxon>
        <taxon>Saccharomycetaceae</taxon>
        <taxon>Saccharomyces</taxon>
    </lineage>
</organism>
<dbReference type="EC" id="2.7.7.3"/>
<dbReference type="EMBL" id="Z73062">
    <property type="protein sequence ID" value="CAA97307.1"/>
    <property type="molecule type" value="Genomic_DNA"/>
</dbReference>
<dbReference type="EMBL" id="AY692609">
    <property type="protein sequence ID" value="AAT92628.1"/>
    <property type="molecule type" value="Genomic_DNA"/>
</dbReference>
<dbReference type="EMBL" id="BK006941">
    <property type="protein sequence ID" value="DAA08365.1"/>
    <property type="molecule type" value="Genomic_DNA"/>
</dbReference>
<dbReference type="PIR" id="S64612">
    <property type="entry name" value="S64612"/>
</dbReference>
<dbReference type="RefSeq" id="NP_011793.3">
    <property type="nucleotide sequence ID" value="NM_001181406.3"/>
</dbReference>
<dbReference type="SMR" id="P53332"/>
<dbReference type="BioGRID" id="33527">
    <property type="interactions" value="258"/>
</dbReference>
<dbReference type="ComplexPortal" id="CPX-396">
    <property type="entry name" value="Coenzyme A-synthesizing protein complex"/>
</dbReference>
<dbReference type="DIP" id="DIP-4904N"/>
<dbReference type="FunCoup" id="P53332">
    <property type="interactions" value="231"/>
</dbReference>
<dbReference type="IntAct" id="P53332">
    <property type="interactions" value="7"/>
</dbReference>
<dbReference type="MINT" id="P53332"/>
<dbReference type="STRING" id="4932.YGR277C"/>
<dbReference type="iPTMnet" id="P53332"/>
<dbReference type="PaxDb" id="4932-YGR277C"/>
<dbReference type="PeptideAtlas" id="P53332"/>
<dbReference type="EnsemblFungi" id="YGR277C_mRNA">
    <property type="protein sequence ID" value="YGR277C"/>
    <property type="gene ID" value="YGR277C"/>
</dbReference>
<dbReference type="GeneID" id="853194"/>
<dbReference type="KEGG" id="sce:YGR277C"/>
<dbReference type="AGR" id="SGD:S000003509"/>
<dbReference type="SGD" id="S000003509">
    <property type="gene designation" value="CAB4"/>
</dbReference>
<dbReference type="VEuPathDB" id="FungiDB:YGR277C"/>
<dbReference type="eggNOG" id="KOG3351">
    <property type="taxonomic scope" value="Eukaryota"/>
</dbReference>
<dbReference type="HOGENOM" id="CLU_035272_0_1_1"/>
<dbReference type="InParanoid" id="P53332"/>
<dbReference type="OMA" id="KDVCGPT"/>
<dbReference type="OrthoDB" id="330671at2759"/>
<dbReference type="BioCyc" id="MetaCyc:MONOMER3O-487"/>
<dbReference type="BioCyc" id="YEAST:MONOMER3O-487"/>
<dbReference type="Reactome" id="R-SCE-196783">
    <property type="pathway name" value="Coenzyme A biosynthesis"/>
</dbReference>
<dbReference type="BioGRID-ORCS" id="853194">
    <property type="hits" value="10 hits in 10 CRISPR screens"/>
</dbReference>
<dbReference type="PRO" id="PR:P53332"/>
<dbReference type="Proteomes" id="UP000002311">
    <property type="component" value="Chromosome VII"/>
</dbReference>
<dbReference type="RNAct" id="P53332">
    <property type="molecule type" value="protein"/>
</dbReference>
<dbReference type="GO" id="GO:1990143">
    <property type="term" value="C:CoA-synthesizing protein complex"/>
    <property type="evidence" value="ECO:0000314"/>
    <property type="project" value="SGD"/>
</dbReference>
<dbReference type="GO" id="GO:0005737">
    <property type="term" value="C:cytoplasm"/>
    <property type="evidence" value="ECO:0007005"/>
    <property type="project" value="SGD"/>
</dbReference>
<dbReference type="GO" id="GO:0005634">
    <property type="term" value="C:nucleus"/>
    <property type="evidence" value="ECO:0007005"/>
    <property type="project" value="SGD"/>
</dbReference>
<dbReference type="GO" id="GO:0005524">
    <property type="term" value="F:ATP binding"/>
    <property type="evidence" value="ECO:0007669"/>
    <property type="project" value="UniProtKB-KW"/>
</dbReference>
<dbReference type="GO" id="GO:0004140">
    <property type="term" value="F:dephospho-CoA kinase activity"/>
    <property type="evidence" value="ECO:0000318"/>
    <property type="project" value="GO_Central"/>
</dbReference>
<dbReference type="GO" id="GO:0004595">
    <property type="term" value="F:pantetheine-phosphate adenylyltransferase activity"/>
    <property type="evidence" value="ECO:0000250"/>
    <property type="project" value="SGD"/>
</dbReference>
<dbReference type="GO" id="GO:0015937">
    <property type="term" value="P:coenzyme A biosynthetic process"/>
    <property type="evidence" value="ECO:0000316"/>
    <property type="project" value="SGD"/>
</dbReference>
<dbReference type="CDD" id="cd02164">
    <property type="entry name" value="PPAT_CoAS"/>
    <property type="match status" value="1"/>
</dbReference>
<dbReference type="FunFam" id="3.40.50.620:FF:000238">
    <property type="entry name" value="Phosphopantetheine adenylyltransferase"/>
    <property type="match status" value="1"/>
</dbReference>
<dbReference type="Gene3D" id="3.40.50.620">
    <property type="entry name" value="HUPs"/>
    <property type="match status" value="1"/>
</dbReference>
<dbReference type="InterPro" id="IPR004821">
    <property type="entry name" value="Cyt_trans-like"/>
</dbReference>
<dbReference type="InterPro" id="IPR014729">
    <property type="entry name" value="Rossmann-like_a/b/a_fold"/>
</dbReference>
<dbReference type="NCBIfam" id="NF001985">
    <property type="entry name" value="PRK00777.1"/>
    <property type="match status" value="1"/>
</dbReference>
<dbReference type="PANTHER" id="PTHR10695:SF46">
    <property type="entry name" value="BIFUNCTIONAL COENZYME A SYNTHASE-RELATED"/>
    <property type="match status" value="1"/>
</dbReference>
<dbReference type="PANTHER" id="PTHR10695">
    <property type="entry name" value="DEPHOSPHO-COA KINASE-RELATED"/>
    <property type="match status" value="1"/>
</dbReference>
<dbReference type="Pfam" id="PF01467">
    <property type="entry name" value="CTP_transf_like"/>
    <property type="match status" value="1"/>
</dbReference>
<dbReference type="SUPFAM" id="SSF52374">
    <property type="entry name" value="Nucleotidylyl transferase"/>
    <property type="match status" value="1"/>
</dbReference>
<sequence length="305" mass="34307">MVEENSRVLIVLPYTPPSATLQRIIGQTIPFLRECQSQLDIVIVPEFKTSFQLDSALGKMYSITRDVLLGYGMINSGINIIFNNIHFVESNLQWKVVLLPQESTFETWKLELGQGQYHSIEHYALHDNIMEEIEGPKDANKFHVTALGGTFDHIHDGHKILLSVSTFITSQRLICGITCDELLQNKKYKELIEPYDTRCRHVHQFIKLLKPDLSVELVPLRDVCGPTGKVPEIECLVVSRETVSGAETVNKTRIEKGMSPLAVHVVNVLGGREEDGWSEKLSSTEIRRLLKSSASPTCTPQNPCV</sequence>
<comment type="function">
    <text evidence="1 4">Reversibly transfers an adenylyl group from ATP to 4'-phosphopantetheine, yielding dephospho-CoA (dPCoA) and pyrophosphate (By similarity). Plays a role in the physiological regulation of the intracellular CoA concentration.</text>
</comment>
<comment type="catalytic activity">
    <reaction>
        <text>(R)-4'-phosphopantetheine + ATP + H(+) = 3'-dephospho-CoA + diphosphate</text>
        <dbReference type="Rhea" id="RHEA:19801"/>
        <dbReference type="ChEBI" id="CHEBI:15378"/>
        <dbReference type="ChEBI" id="CHEBI:30616"/>
        <dbReference type="ChEBI" id="CHEBI:33019"/>
        <dbReference type="ChEBI" id="CHEBI:57328"/>
        <dbReference type="ChEBI" id="CHEBI:61723"/>
        <dbReference type="EC" id="2.7.7.3"/>
    </reaction>
</comment>
<comment type="interaction">
    <interactant intactId="EBI-23648">
        <id>P53332</id>
    </interactant>
    <interactant intactId="EBI-25089">
        <id>P40506</id>
        <label>CAB2</label>
    </interactant>
    <organismsDiffer>false</organismsDiffer>
    <experiments>6</experiments>
</comment>
<comment type="interaction">
    <interactant intactId="EBI-23648">
        <id>P53332</id>
    </interactant>
    <interactant intactId="EBI-26778">
        <id>P36076</id>
        <label>CAB3</label>
    </interactant>
    <organismsDiffer>false</organismsDiffer>
    <experiments>5</experiments>
</comment>
<comment type="interaction">
    <interactant intactId="EBI-23648">
        <id>P53332</id>
    </interactant>
    <interactant intactId="EBI-22174">
        <id>Q03941</id>
        <label>CAB5</label>
    </interactant>
    <organismsDiffer>false</organismsDiffer>
    <experiments>6</experiments>
</comment>
<comment type="subcellular location">
    <subcellularLocation>
        <location evidence="3">Cytoplasm</location>
    </subcellularLocation>
    <subcellularLocation>
        <location evidence="3">Nucleus</location>
    </subcellularLocation>
</comment>
<comment type="miscellaneous">
    <text evidence="2">Present with 3610 molecules/cell in log phase SD medium.</text>
</comment>
<comment type="similarity">
    <text evidence="5">Belongs to the eukaryotic CoaD family.</text>
</comment>
<keyword id="KW-0067">ATP-binding</keyword>
<keyword id="KW-0173">Coenzyme A biosynthesis</keyword>
<keyword id="KW-0963">Cytoplasm</keyword>
<keyword id="KW-0547">Nucleotide-binding</keyword>
<keyword id="KW-0548">Nucleotidyltransferase</keyword>
<keyword id="KW-0539">Nucleus</keyword>
<keyword id="KW-1185">Reference proteome</keyword>
<keyword id="KW-0808">Transferase</keyword>
<name>COAD_YEAST</name>